<reference key="1">
    <citation type="journal article" date="2009" name="BMC Microbiol.">
        <title>The genome sequence of Geobacter metallireducens: features of metabolism, physiology and regulation common and dissimilar to Geobacter sulfurreducens.</title>
        <authorList>
            <person name="Aklujkar M."/>
            <person name="Krushkal J."/>
            <person name="DiBartolo G."/>
            <person name="Lapidus A."/>
            <person name="Land M.L."/>
            <person name="Lovley D.R."/>
        </authorList>
    </citation>
    <scope>NUCLEOTIDE SEQUENCE [LARGE SCALE GENOMIC DNA]</scope>
    <source>
        <strain>ATCC 53774 / DSM 7210 / GS-15</strain>
    </source>
</reference>
<evidence type="ECO:0000255" key="1">
    <source>
        <dbReference type="HAMAP-Rule" id="MF_00487"/>
    </source>
</evidence>
<name>MDH_GEOMG</name>
<accession>Q39VY0</accession>
<organism>
    <name type="scientific">Geobacter metallireducens (strain ATCC 53774 / DSM 7210 / GS-15)</name>
    <dbReference type="NCBI Taxonomy" id="269799"/>
    <lineage>
        <taxon>Bacteria</taxon>
        <taxon>Pseudomonadati</taxon>
        <taxon>Thermodesulfobacteriota</taxon>
        <taxon>Desulfuromonadia</taxon>
        <taxon>Geobacterales</taxon>
        <taxon>Geobacteraceae</taxon>
        <taxon>Geobacter</taxon>
    </lineage>
</organism>
<feature type="chain" id="PRO_0000241950" description="Malate dehydrogenase">
    <location>
        <begin position="1"/>
        <end position="317"/>
    </location>
</feature>
<feature type="active site" description="Proton acceptor" evidence="1">
    <location>
        <position position="176"/>
    </location>
</feature>
<feature type="binding site" evidence="1">
    <location>
        <begin position="10"/>
        <end position="15"/>
    </location>
    <ligand>
        <name>NAD(+)</name>
        <dbReference type="ChEBI" id="CHEBI:57540"/>
    </ligand>
</feature>
<feature type="binding site" evidence="1">
    <location>
        <position position="34"/>
    </location>
    <ligand>
        <name>NAD(+)</name>
        <dbReference type="ChEBI" id="CHEBI:57540"/>
    </ligand>
</feature>
<feature type="binding site" evidence="1">
    <location>
        <position position="83"/>
    </location>
    <ligand>
        <name>substrate</name>
    </ligand>
</feature>
<feature type="binding site" evidence="1">
    <location>
        <position position="89"/>
    </location>
    <ligand>
        <name>substrate</name>
    </ligand>
</feature>
<feature type="binding site" evidence="1">
    <location>
        <position position="96"/>
    </location>
    <ligand>
        <name>NAD(+)</name>
        <dbReference type="ChEBI" id="CHEBI:57540"/>
    </ligand>
</feature>
<feature type="binding site" evidence="1">
    <location>
        <begin position="119"/>
        <end position="121"/>
    </location>
    <ligand>
        <name>NAD(+)</name>
        <dbReference type="ChEBI" id="CHEBI:57540"/>
    </ligand>
</feature>
<feature type="binding site" evidence="1">
    <location>
        <position position="121"/>
    </location>
    <ligand>
        <name>substrate</name>
    </ligand>
</feature>
<feature type="binding site" evidence="1">
    <location>
        <position position="152"/>
    </location>
    <ligand>
        <name>substrate</name>
    </ligand>
</feature>
<comment type="function">
    <text evidence="1">Catalyzes the reversible oxidation of malate to oxaloacetate.</text>
</comment>
<comment type="catalytic activity">
    <reaction evidence="1">
        <text>(S)-malate + NAD(+) = oxaloacetate + NADH + H(+)</text>
        <dbReference type="Rhea" id="RHEA:21432"/>
        <dbReference type="ChEBI" id="CHEBI:15378"/>
        <dbReference type="ChEBI" id="CHEBI:15589"/>
        <dbReference type="ChEBI" id="CHEBI:16452"/>
        <dbReference type="ChEBI" id="CHEBI:57540"/>
        <dbReference type="ChEBI" id="CHEBI:57945"/>
        <dbReference type="EC" id="1.1.1.37"/>
    </reaction>
</comment>
<comment type="similarity">
    <text evidence="1">Belongs to the LDH/MDH superfamily. MDH type 3 family.</text>
</comment>
<dbReference type="EC" id="1.1.1.37" evidence="1"/>
<dbReference type="EMBL" id="CP000148">
    <property type="protein sequence ID" value="ABB31594.1"/>
    <property type="molecule type" value="Genomic_DNA"/>
</dbReference>
<dbReference type="RefSeq" id="WP_004513148.1">
    <property type="nucleotide sequence ID" value="NC_007517.1"/>
</dbReference>
<dbReference type="SMR" id="Q39VY0"/>
<dbReference type="STRING" id="269799.Gmet_1360"/>
<dbReference type="KEGG" id="gme:Gmet_1360"/>
<dbReference type="eggNOG" id="COG0039">
    <property type="taxonomic scope" value="Bacteria"/>
</dbReference>
<dbReference type="HOGENOM" id="CLU_045401_2_1_7"/>
<dbReference type="Proteomes" id="UP000007073">
    <property type="component" value="Chromosome"/>
</dbReference>
<dbReference type="GO" id="GO:0004459">
    <property type="term" value="F:L-lactate dehydrogenase activity"/>
    <property type="evidence" value="ECO:0007669"/>
    <property type="project" value="TreeGrafter"/>
</dbReference>
<dbReference type="GO" id="GO:0030060">
    <property type="term" value="F:L-malate dehydrogenase (NAD+) activity"/>
    <property type="evidence" value="ECO:0007669"/>
    <property type="project" value="UniProtKB-UniRule"/>
</dbReference>
<dbReference type="GO" id="GO:0006089">
    <property type="term" value="P:lactate metabolic process"/>
    <property type="evidence" value="ECO:0007669"/>
    <property type="project" value="TreeGrafter"/>
</dbReference>
<dbReference type="GO" id="GO:0006099">
    <property type="term" value="P:tricarboxylic acid cycle"/>
    <property type="evidence" value="ECO:0007669"/>
    <property type="project" value="UniProtKB-UniRule"/>
</dbReference>
<dbReference type="CDD" id="cd01339">
    <property type="entry name" value="LDH-like_MDH"/>
    <property type="match status" value="1"/>
</dbReference>
<dbReference type="FunFam" id="3.40.50.720:FF:000018">
    <property type="entry name" value="Malate dehydrogenase"/>
    <property type="match status" value="1"/>
</dbReference>
<dbReference type="FunFam" id="3.90.110.10:FF:000004">
    <property type="entry name" value="Malate dehydrogenase"/>
    <property type="match status" value="1"/>
</dbReference>
<dbReference type="Gene3D" id="3.90.110.10">
    <property type="entry name" value="Lactate dehydrogenase/glycoside hydrolase, family 4, C-terminal"/>
    <property type="match status" value="1"/>
</dbReference>
<dbReference type="Gene3D" id="3.40.50.720">
    <property type="entry name" value="NAD(P)-binding Rossmann-like Domain"/>
    <property type="match status" value="1"/>
</dbReference>
<dbReference type="HAMAP" id="MF_00487">
    <property type="entry name" value="Malate_dehydrog_3"/>
    <property type="match status" value="1"/>
</dbReference>
<dbReference type="InterPro" id="IPR001557">
    <property type="entry name" value="L-lactate/malate_DH"/>
</dbReference>
<dbReference type="InterPro" id="IPR022383">
    <property type="entry name" value="Lactate/malate_DH_C"/>
</dbReference>
<dbReference type="InterPro" id="IPR001236">
    <property type="entry name" value="Lactate/malate_DH_N"/>
</dbReference>
<dbReference type="InterPro" id="IPR015955">
    <property type="entry name" value="Lactate_DH/Glyco_Ohase_4_C"/>
</dbReference>
<dbReference type="InterPro" id="IPR011275">
    <property type="entry name" value="Malate_DH_type3"/>
</dbReference>
<dbReference type="InterPro" id="IPR036291">
    <property type="entry name" value="NAD(P)-bd_dom_sf"/>
</dbReference>
<dbReference type="NCBIfam" id="TIGR01763">
    <property type="entry name" value="MalateDH_bact"/>
    <property type="match status" value="1"/>
</dbReference>
<dbReference type="NCBIfam" id="NF004863">
    <property type="entry name" value="PRK06223.1"/>
    <property type="match status" value="1"/>
</dbReference>
<dbReference type="PANTHER" id="PTHR43128">
    <property type="entry name" value="L-2-HYDROXYCARBOXYLATE DEHYDROGENASE (NAD(P)(+))"/>
    <property type="match status" value="1"/>
</dbReference>
<dbReference type="PANTHER" id="PTHR43128:SF16">
    <property type="entry name" value="L-LACTATE DEHYDROGENASE"/>
    <property type="match status" value="1"/>
</dbReference>
<dbReference type="Pfam" id="PF02866">
    <property type="entry name" value="Ldh_1_C"/>
    <property type="match status" value="1"/>
</dbReference>
<dbReference type="Pfam" id="PF00056">
    <property type="entry name" value="Ldh_1_N"/>
    <property type="match status" value="1"/>
</dbReference>
<dbReference type="PIRSF" id="PIRSF000102">
    <property type="entry name" value="Lac_mal_DH"/>
    <property type="match status" value="1"/>
</dbReference>
<dbReference type="PRINTS" id="PR00086">
    <property type="entry name" value="LLDHDRGNASE"/>
</dbReference>
<dbReference type="SUPFAM" id="SSF56327">
    <property type="entry name" value="LDH C-terminal domain-like"/>
    <property type="match status" value="1"/>
</dbReference>
<dbReference type="SUPFAM" id="SSF51735">
    <property type="entry name" value="NAD(P)-binding Rossmann-fold domains"/>
    <property type="match status" value="1"/>
</dbReference>
<proteinExistence type="inferred from homology"/>
<protein>
    <recommendedName>
        <fullName evidence="1">Malate dehydrogenase</fullName>
        <ecNumber evidence="1">1.1.1.37</ecNumber>
    </recommendedName>
</protein>
<keyword id="KW-0520">NAD</keyword>
<keyword id="KW-0560">Oxidoreductase</keyword>
<keyword id="KW-1185">Reference proteome</keyword>
<keyword id="KW-0816">Tricarboxylic acid cycle</keyword>
<gene>
    <name evidence="1" type="primary">mdh</name>
    <name type="ordered locus">Gmet_1360</name>
</gene>
<sequence length="317" mass="33729">MARKKISLIGGGQIGGVLAQLCALRELGDVVMFDIVEGLPQGKMLDIAEVGPVDGFDVCLKGTNSYADIAGSDVVIVTAGLPRKPGMSRDDLIEVNSKIMTQVAEGIKQYAPNSFVIVISNPLDAMVTLCQKITGFPYNRVIGQAGVLDSSRFAAFIAWELGVSVKDVVAVTLGGHGDDMVPLVRYTSVCGIPVMELLERKYKDKAKAKEVMEAMVKRTRGAGGEVVALLKTGSAFYSPASAAIAMTESILKDQKRVLPTCCFLQGEFGVNGYYVGVPAVLGENGVEQIIQFNLDAEEQAMMDKSVAAVKSLVDSLK</sequence>